<proteinExistence type="inferred from homology"/>
<dbReference type="EC" id="3.1.21.10" evidence="1"/>
<dbReference type="EMBL" id="CP000001">
    <property type="protein sequence ID" value="AAU18818.1"/>
    <property type="molecule type" value="Genomic_DNA"/>
</dbReference>
<dbReference type="RefSeq" id="WP_000155594.1">
    <property type="nucleotide sequence ID" value="NZ_CP009968.1"/>
</dbReference>
<dbReference type="SMR" id="Q63DI3"/>
<dbReference type="GeneID" id="45021545"/>
<dbReference type="KEGG" id="bcz:BCE33L1432"/>
<dbReference type="PATRIC" id="fig|288681.22.peg.4120"/>
<dbReference type="Proteomes" id="UP000002612">
    <property type="component" value="Chromosome"/>
</dbReference>
<dbReference type="GO" id="GO:0005737">
    <property type="term" value="C:cytoplasm"/>
    <property type="evidence" value="ECO:0007669"/>
    <property type="project" value="UniProtKB-SubCell"/>
</dbReference>
<dbReference type="GO" id="GO:0004519">
    <property type="term" value="F:endonuclease activity"/>
    <property type="evidence" value="ECO:0007669"/>
    <property type="project" value="UniProtKB-UniRule"/>
</dbReference>
<dbReference type="GO" id="GO:0000287">
    <property type="term" value="F:magnesium ion binding"/>
    <property type="evidence" value="ECO:0007669"/>
    <property type="project" value="UniProtKB-UniRule"/>
</dbReference>
<dbReference type="GO" id="GO:0003676">
    <property type="term" value="F:nucleic acid binding"/>
    <property type="evidence" value="ECO:0007669"/>
    <property type="project" value="InterPro"/>
</dbReference>
<dbReference type="GO" id="GO:0007059">
    <property type="term" value="P:chromosome segregation"/>
    <property type="evidence" value="ECO:0007669"/>
    <property type="project" value="UniProtKB-UniRule"/>
</dbReference>
<dbReference type="GO" id="GO:0006310">
    <property type="term" value="P:DNA recombination"/>
    <property type="evidence" value="ECO:0007669"/>
    <property type="project" value="UniProtKB-UniRule"/>
</dbReference>
<dbReference type="GO" id="GO:0006281">
    <property type="term" value="P:DNA repair"/>
    <property type="evidence" value="ECO:0007669"/>
    <property type="project" value="UniProtKB-UniRule"/>
</dbReference>
<dbReference type="CDD" id="cd22354">
    <property type="entry name" value="RecU-like"/>
    <property type="match status" value="1"/>
</dbReference>
<dbReference type="Gene3D" id="3.40.1350.10">
    <property type="match status" value="1"/>
</dbReference>
<dbReference type="HAMAP" id="MF_00130">
    <property type="entry name" value="RecU"/>
    <property type="match status" value="1"/>
</dbReference>
<dbReference type="InterPro" id="IPR004612">
    <property type="entry name" value="Resolv_RecU"/>
</dbReference>
<dbReference type="InterPro" id="IPR011335">
    <property type="entry name" value="Restrct_endonuc-II-like"/>
</dbReference>
<dbReference type="InterPro" id="IPR011856">
    <property type="entry name" value="tRNA_endonuc-like_dom_sf"/>
</dbReference>
<dbReference type="NCBIfam" id="NF002581">
    <property type="entry name" value="PRK02234.1-2"/>
    <property type="match status" value="1"/>
</dbReference>
<dbReference type="NCBIfam" id="NF002584">
    <property type="entry name" value="PRK02234.1-5"/>
    <property type="match status" value="1"/>
</dbReference>
<dbReference type="NCBIfam" id="NF002585">
    <property type="entry name" value="PRK02234.1-6"/>
    <property type="match status" value="1"/>
</dbReference>
<dbReference type="NCBIfam" id="TIGR00648">
    <property type="entry name" value="recU"/>
    <property type="match status" value="1"/>
</dbReference>
<dbReference type="Pfam" id="PF03838">
    <property type="entry name" value="RecU"/>
    <property type="match status" value="1"/>
</dbReference>
<dbReference type="PIRSF" id="PIRSF037785">
    <property type="entry name" value="RecU"/>
    <property type="match status" value="1"/>
</dbReference>
<dbReference type="SUPFAM" id="SSF52980">
    <property type="entry name" value="Restriction endonuclease-like"/>
    <property type="match status" value="1"/>
</dbReference>
<keyword id="KW-0963">Cytoplasm</keyword>
<keyword id="KW-0227">DNA damage</keyword>
<keyword id="KW-0233">DNA recombination</keyword>
<keyword id="KW-0234">DNA repair</keyword>
<keyword id="KW-0255">Endonuclease</keyword>
<keyword id="KW-0378">Hydrolase</keyword>
<keyword id="KW-0460">Magnesium</keyword>
<keyword id="KW-0479">Metal-binding</keyword>
<keyword id="KW-0540">Nuclease</keyword>
<feature type="chain" id="PRO_1000016719" description="Holliday junction resolvase RecU">
    <location>
        <begin position="1"/>
        <end position="200"/>
    </location>
</feature>
<feature type="region of interest" description="Disordered" evidence="2">
    <location>
        <begin position="1"/>
        <end position="25"/>
    </location>
</feature>
<feature type="binding site" evidence="1">
    <location>
        <position position="85"/>
    </location>
    <ligand>
        <name>Mg(2+)</name>
        <dbReference type="ChEBI" id="CHEBI:18420"/>
    </ligand>
</feature>
<feature type="binding site" evidence="1">
    <location>
        <position position="87"/>
    </location>
    <ligand>
        <name>Mg(2+)</name>
        <dbReference type="ChEBI" id="CHEBI:18420"/>
    </ligand>
</feature>
<feature type="binding site" evidence="1">
    <location>
        <position position="100"/>
    </location>
    <ligand>
        <name>Mg(2+)</name>
        <dbReference type="ChEBI" id="CHEBI:18420"/>
    </ligand>
</feature>
<feature type="binding site" evidence="1">
    <location>
        <position position="119"/>
    </location>
    <ligand>
        <name>Mg(2+)</name>
        <dbReference type="ChEBI" id="CHEBI:18420"/>
    </ligand>
</feature>
<feature type="site" description="Transition state stabilizer" evidence="1">
    <location>
        <position position="102"/>
    </location>
</feature>
<accession>Q63DI3</accession>
<protein>
    <recommendedName>
        <fullName evidence="1">Holliday junction resolvase RecU</fullName>
        <ecNumber evidence="1">3.1.21.10</ecNumber>
    </recommendedName>
    <alternativeName>
        <fullName evidence="1">Recombination protein U homolog</fullName>
    </alternativeName>
</protein>
<organism>
    <name type="scientific">Bacillus cereus (strain ZK / E33L)</name>
    <dbReference type="NCBI Taxonomy" id="288681"/>
    <lineage>
        <taxon>Bacteria</taxon>
        <taxon>Bacillati</taxon>
        <taxon>Bacillota</taxon>
        <taxon>Bacilli</taxon>
        <taxon>Bacillales</taxon>
        <taxon>Bacillaceae</taxon>
        <taxon>Bacillus</taxon>
        <taxon>Bacillus cereus group</taxon>
    </lineage>
</organism>
<reference key="1">
    <citation type="journal article" date="2006" name="J. Bacteriol.">
        <title>Pathogenomic sequence analysis of Bacillus cereus and Bacillus thuringiensis isolates closely related to Bacillus anthracis.</title>
        <authorList>
            <person name="Han C.S."/>
            <person name="Xie G."/>
            <person name="Challacombe J.F."/>
            <person name="Altherr M.R."/>
            <person name="Bhotika S.S."/>
            <person name="Bruce D."/>
            <person name="Campbell C.S."/>
            <person name="Campbell M.L."/>
            <person name="Chen J."/>
            <person name="Chertkov O."/>
            <person name="Cleland C."/>
            <person name="Dimitrijevic M."/>
            <person name="Doggett N.A."/>
            <person name="Fawcett J.J."/>
            <person name="Glavina T."/>
            <person name="Goodwin L.A."/>
            <person name="Hill K.K."/>
            <person name="Hitchcock P."/>
            <person name="Jackson P.J."/>
            <person name="Keim P."/>
            <person name="Kewalramani A.R."/>
            <person name="Longmire J."/>
            <person name="Lucas S."/>
            <person name="Malfatti S."/>
            <person name="McMurry K."/>
            <person name="Meincke L.J."/>
            <person name="Misra M."/>
            <person name="Moseman B.L."/>
            <person name="Mundt M."/>
            <person name="Munk A.C."/>
            <person name="Okinaka R.T."/>
            <person name="Parson-Quintana B."/>
            <person name="Reilly L.P."/>
            <person name="Richardson P."/>
            <person name="Robinson D.L."/>
            <person name="Rubin E."/>
            <person name="Saunders E."/>
            <person name="Tapia R."/>
            <person name="Tesmer J.G."/>
            <person name="Thayer N."/>
            <person name="Thompson L.S."/>
            <person name="Tice H."/>
            <person name="Ticknor L.O."/>
            <person name="Wills P.L."/>
            <person name="Brettin T.S."/>
            <person name="Gilna P."/>
        </authorList>
    </citation>
    <scope>NUCLEOTIDE SEQUENCE [LARGE SCALE GENOMIC DNA]</scope>
    <source>
        <strain>ZK / E33L</strain>
    </source>
</reference>
<sequence length="200" mass="23343">MTIRYPNGKRYNQASQPHKTPIKKHTYSNRGMSLEEELNETNEYYLTHNIACVHKKPTPLQIVKVDYPARSAAVVKEAYFKQPSTTDYNGVYKGKYIDFEAKETKNKTSFPLQNFHLHQIEHMKQVIAHNGIAFVIIKFTLFDELYLLDAKHIITFWNRQNTGGRKSITKEEIVEHGSLLSCGYHPRIDYIRVLDTVYFS</sequence>
<comment type="function">
    <text evidence="1">Endonuclease that resolves Holliday junction intermediates in genetic recombination. Cleaves mobile four-strand junctions by introducing symmetrical nicks in paired strands. Promotes annealing of linear ssDNA with homologous dsDNA. Required for DNA repair, homologous recombination and chromosome segregation.</text>
</comment>
<comment type="catalytic activity">
    <reaction evidence="1">
        <text>Endonucleolytic cleavage at a junction such as a reciprocal single-stranded crossover between two homologous DNA duplexes (Holliday junction).</text>
        <dbReference type="EC" id="3.1.21.10"/>
    </reaction>
</comment>
<comment type="cofactor">
    <cofactor evidence="1">
        <name>Mg(2+)</name>
        <dbReference type="ChEBI" id="CHEBI:18420"/>
    </cofactor>
    <text evidence="1">Binds 1 Mg(2+) ion per subunit.</text>
</comment>
<comment type="subcellular location">
    <subcellularLocation>
        <location evidence="1">Cytoplasm</location>
    </subcellularLocation>
</comment>
<comment type="similarity">
    <text evidence="1">Belongs to the RecU family.</text>
</comment>
<name>RECU_BACCZ</name>
<evidence type="ECO:0000255" key="1">
    <source>
        <dbReference type="HAMAP-Rule" id="MF_00130"/>
    </source>
</evidence>
<evidence type="ECO:0000256" key="2">
    <source>
        <dbReference type="SAM" id="MobiDB-lite"/>
    </source>
</evidence>
<gene>
    <name evidence="1" type="primary">recU</name>
    <name type="ordered locus">BCE33L1432</name>
</gene>